<evidence type="ECO:0000255" key="1">
    <source>
        <dbReference type="HAMAP-Rule" id="MF_00036"/>
    </source>
</evidence>
<protein>
    <recommendedName>
        <fullName evidence="1">Alanine--tRNA ligase</fullName>
        <ecNumber evidence="1">6.1.1.7</ecNumber>
    </recommendedName>
    <alternativeName>
        <fullName evidence="1">Alanyl-tRNA synthetase</fullName>
        <shortName evidence="1">AlaRS</shortName>
    </alternativeName>
</protein>
<feature type="chain" id="PRO_0000347491" description="Alanine--tRNA ligase">
    <location>
        <begin position="1"/>
        <end position="851"/>
    </location>
</feature>
<feature type="binding site" evidence="1">
    <location>
        <position position="554"/>
    </location>
    <ligand>
        <name>Zn(2+)</name>
        <dbReference type="ChEBI" id="CHEBI:29105"/>
    </ligand>
</feature>
<feature type="binding site" evidence="1">
    <location>
        <position position="558"/>
    </location>
    <ligand>
        <name>Zn(2+)</name>
        <dbReference type="ChEBI" id="CHEBI:29105"/>
    </ligand>
</feature>
<feature type="binding site" evidence="1">
    <location>
        <position position="656"/>
    </location>
    <ligand>
        <name>Zn(2+)</name>
        <dbReference type="ChEBI" id="CHEBI:29105"/>
    </ligand>
</feature>
<feature type="binding site" evidence="1">
    <location>
        <position position="660"/>
    </location>
    <ligand>
        <name>Zn(2+)</name>
        <dbReference type="ChEBI" id="CHEBI:29105"/>
    </ligand>
</feature>
<sequence>MDIRKEYLEFFRSKGHEVISSMPLVPDDPTLMFTNAGMVQFKDIFTGAVPTPKNKRATSCQLCVRAGGKHNDLENVGYTARHHTLFEMLGNFSFGDYFKEDAIAYAWEFVTVNLALPIDKLWVTVHNNDDEAFDIWSKYINPSRIMRFGDKDNFWSMGDTGACGPCSEIFYDQGEENFNGEEDYMGGDGDRFLEIWNLVFMQYERTADGKLNPLPKPSIDTGMGLERVIAIKEGVFNNFDSSNFKPIIKKIEEISSKNATSENIGSYRVIADHLRACSFMLSQGILFGNEGRPYVLRRILRRAVRHGYLIGFRKPFMAKLLDTLIEIMGGHYTELVENKNFIEEQLTLEEDRFFKTIDLGMSLFNEELEKTKDIFSGVTAFKLYDTYGFPLDLTEDMLRDRGLKVDLAKFDELMNNQKAMAKAAWKGSGDTSNEGDFKQLLEKFGSNEFVGYNNTTYKSKIIALLDEHFKEVKILEKDSTGWVMLDKTPFYATSGGQNGDIGALEDNKHIAIVEETTKFHGLNLSKVKVVNSSLKQGESVDAIVVNRNEVAKHHSATHLLQSALKIVLGDTVSQAGSLNDASRLRFDFTYPKAMTKEQIDEVEDLVNSMIARGISGNVEELPIEQAKKKGAIAMFGEKYGDVVRVVSFEDVSVEFCGGTHVRNTADIGSFYIVKESGVSAGVRRIEAVCGTAAIKYTKDIISKMNEIQAEVKNSDVILGIKKLKEQIKDLKKEIETSQSKTSSPIEETIINDTKVIVSVVENGDLKKIVDDTKNANEKVAIFLLQAKDDKVLIVAGSKNTNIKAGDWIKNIAPIVGGGGGGRPDFAQAGGKDTSKIQEAKTKALDYAKENL</sequence>
<organism>
    <name type="scientific">Aliarcobacter butzleri (strain RM4018)</name>
    <name type="common">Arcobacter butzleri</name>
    <dbReference type="NCBI Taxonomy" id="367737"/>
    <lineage>
        <taxon>Bacteria</taxon>
        <taxon>Pseudomonadati</taxon>
        <taxon>Campylobacterota</taxon>
        <taxon>Epsilonproteobacteria</taxon>
        <taxon>Campylobacterales</taxon>
        <taxon>Arcobacteraceae</taxon>
        <taxon>Aliarcobacter</taxon>
    </lineage>
</organism>
<dbReference type="EC" id="6.1.1.7" evidence="1"/>
<dbReference type="EMBL" id="CP000361">
    <property type="protein sequence ID" value="ABV68309.1"/>
    <property type="molecule type" value="Genomic_DNA"/>
</dbReference>
<dbReference type="RefSeq" id="WP_012147965.1">
    <property type="nucleotide sequence ID" value="NC_009850.1"/>
</dbReference>
<dbReference type="SMR" id="A8EWI6"/>
<dbReference type="STRING" id="367737.Abu_2092"/>
<dbReference type="GeneID" id="24304841"/>
<dbReference type="KEGG" id="abu:Abu_2092"/>
<dbReference type="eggNOG" id="COG0013">
    <property type="taxonomic scope" value="Bacteria"/>
</dbReference>
<dbReference type="HOGENOM" id="CLU_004485_1_1_7"/>
<dbReference type="Proteomes" id="UP000001136">
    <property type="component" value="Chromosome"/>
</dbReference>
<dbReference type="GO" id="GO:0005829">
    <property type="term" value="C:cytosol"/>
    <property type="evidence" value="ECO:0007669"/>
    <property type="project" value="TreeGrafter"/>
</dbReference>
<dbReference type="GO" id="GO:0004813">
    <property type="term" value="F:alanine-tRNA ligase activity"/>
    <property type="evidence" value="ECO:0007669"/>
    <property type="project" value="UniProtKB-UniRule"/>
</dbReference>
<dbReference type="GO" id="GO:0002161">
    <property type="term" value="F:aminoacyl-tRNA deacylase activity"/>
    <property type="evidence" value="ECO:0007669"/>
    <property type="project" value="TreeGrafter"/>
</dbReference>
<dbReference type="GO" id="GO:0005524">
    <property type="term" value="F:ATP binding"/>
    <property type="evidence" value="ECO:0007669"/>
    <property type="project" value="UniProtKB-UniRule"/>
</dbReference>
<dbReference type="GO" id="GO:0000049">
    <property type="term" value="F:tRNA binding"/>
    <property type="evidence" value="ECO:0007669"/>
    <property type="project" value="UniProtKB-KW"/>
</dbReference>
<dbReference type="GO" id="GO:0008270">
    <property type="term" value="F:zinc ion binding"/>
    <property type="evidence" value="ECO:0007669"/>
    <property type="project" value="UniProtKB-UniRule"/>
</dbReference>
<dbReference type="GO" id="GO:0006419">
    <property type="term" value="P:alanyl-tRNA aminoacylation"/>
    <property type="evidence" value="ECO:0007669"/>
    <property type="project" value="UniProtKB-UniRule"/>
</dbReference>
<dbReference type="GO" id="GO:0045892">
    <property type="term" value="P:negative regulation of DNA-templated transcription"/>
    <property type="evidence" value="ECO:0007669"/>
    <property type="project" value="TreeGrafter"/>
</dbReference>
<dbReference type="CDD" id="cd00673">
    <property type="entry name" value="AlaRS_core"/>
    <property type="match status" value="1"/>
</dbReference>
<dbReference type="FunFam" id="3.10.310.40:FF:000001">
    <property type="entry name" value="Alanine--tRNA ligase"/>
    <property type="match status" value="1"/>
</dbReference>
<dbReference type="FunFam" id="3.30.54.20:FF:000001">
    <property type="entry name" value="Alanine--tRNA ligase"/>
    <property type="match status" value="1"/>
</dbReference>
<dbReference type="FunFam" id="3.30.930.10:FF:000004">
    <property type="entry name" value="Alanine--tRNA ligase"/>
    <property type="match status" value="1"/>
</dbReference>
<dbReference type="FunFam" id="3.30.980.10:FF:000004">
    <property type="entry name" value="Alanine--tRNA ligase, cytoplasmic"/>
    <property type="match status" value="1"/>
</dbReference>
<dbReference type="Gene3D" id="2.40.30.130">
    <property type="match status" value="1"/>
</dbReference>
<dbReference type="Gene3D" id="3.10.310.40">
    <property type="match status" value="1"/>
</dbReference>
<dbReference type="Gene3D" id="3.30.54.20">
    <property type="match status" value="1"/>
</dbReference>
<dbReference type="Gene3D" id="3.30.930.10">
    <property type="entry name" value="Bira Bifunctional Protein, Domain 2"/>
    <property type="match status" value="1"/>
</dbReference>
<dbReference type="Gene3D" id="3.30.980.10">
    <property type="entry name" value="Threonyl-trna Synthetase, Chain A, domain 2"/>
    <property type="match status" value="1"/>
</dbReference>
<dbReference type="HAMAP" id="MF_00036_B">
    <property type="entry name" value="Ala_tRNA_synth_B"/>
    <property type="match status" value="1"/>
</dbReference>
<dbReference type="InterPro" id="IPR045864">
    <property type="entry name" value="aa-tRNA-synth_II/BPL/LPL"/>
</dbReference>
<dbReference type="InterPro" id="IPR002318">
    <property type="entry name" value="Ala-tRNA-lgiase_IIc"/>
</dbReference>
<dbReference type="InterPro" id="IPR018162">
    <property type="entry name" value="Ala-tRNA-ligase_IIc_anticod-bd"/>
</dbReference>
<dbReference type="InterPro" id="IPR018165">
    <property type="entry name" value="Ala-tRNA-synth_IIc_core"/>
</dbReference>
<dbReference type="InterPro" id="IPR018164">
    <property type="entry name" value="Ala-tRNA-synth_IIc_N"/>
</dbReference>
<dbReference type="InterPro" id="IPR050058">
    <property type="entry name" value="Ala-tRNA_ligase"/>
</dbReference>
<dbReference type="InterPro" id="IPR023033">
    <property type="entry name" value="Ala_tRNA_ligase_euk/bac"/>
</dbReference>
<dbReference type="InterPro" id="IPR003156">
    <property type="entry name" value="DHHA1_dom"/>
</dbReference>
<dbReference type="InterPro" id="IPR018163">
    <property type="entry name" value="Thr/Ala-tRNA-synth_IIc_edit"/>
</dbReference>
<dbReference type="InterPro" id="IPR009000">
    <property type="entry name" value="Transl_B-barrel_sf"/>
</dbReference>
<dbReference type="InterPro" id="IPR012947">
    <property type="entry name" value="tRNA_SAD"/>
</dbReference>
<dbReference type="NCBIfam" id="TIGR00344">
    <property type="entry name" value="alaS"/>
    <property type="match status" value="1"/>
</dbReference>
<dbReference type="PANTHER" id="PTHR11777:SF9">
    <property type="entry name" value="ALANINE--TRNA LIGASE, CYTOPLASMIC"/>
    <property type="match status" value="1"/>
</dbReference>
<dbReference type="PANTHER" id="PTHR11777">
    <property type="entry name" value="ALANYL-TRNA SYNTHETASE"/>
    <property type="match status" value="1"/>
</dbReference>
<dbReference type="Pfam" id="PF02272">
    <property type="entry name" value="DHHA1"/>
    <property type="match status" value="1"/>
</dbReference>
<dbReference type="Pfam" id="PF01411">
    <property type="entry name" value="tRNA-synt_2c"/>
    <property type="match status" value="1"/>
</dbReference>
<dbReference type="Pfam" id="PF07973">
    <property type="entry name" value="tRNA_SAD"/>
    <property type="match status" value="1"/>
</dbReference>
<dbReference type="PRINTS" id="PR00980">
    <property type="entry name" value="TRNASYNTHALA"/>
</dbReference>
<dbReference type="SMART" id="SM00863">
    <property type="entry name" value="tRNA_SAD"/>
    <property type="match status" value="1"/>
</dbReference>
<dbReference type="SUPFAM" id="SSF55681">
    <property type="entry name" value="Class II aaRS and biotin synthetases"/>
    <property type="match status" value="1"/>
</dbReference>
<dbReference type="SUPFAM" id="SSF101353">
    <property type="entry name" value="Putative anticodon-binding domain of alanyl-tRNA synthetase (AlaRS)"/>
    <property type="match status" value="1"/>
</dbReference>
<dbReference type="SUPFAM" id="SSF55186">
    <property type="entry name" value="ThrRS/AlaRS common domain"/>
    <property type="match status" value="1"/>
</dbReference>
<dbReference type="SUPFAM" id="SSF50447">
    <property type="entry name" value="Translation proteins"/>
    <property type="match status" value="1"/>
</dbReference>
<dbReference type="PROSITE" id="PS50860">
    <property type="entry name" value="AA_TRNA_LIGASE_II_ALA"/>
    <property type="match status" value="1"/>
</dbReference>
<name>SYA_ALIB4</name>
<gene>
    <name evidence="1" type="primary">alaS</name>
    <name type="ordered locus">Abu_2092</name>
</gene>
<proteinExistence type="inferred from homology"/>
<keyword id="KW-0030">Aminoacyl-tRNA synthetase</keyword>
<keyword id="KW-0067">ATP-binding</keyword>
<keyword id="KW-0963">Cytoplasm</keyword>
<keyword id="KW-0436">Ligase</keyword>
<keyword id="KW-0479">Metal-binding</keyword>
<keyword id="KW-0547">Nucleotide-binding</keyword>
<keyword id="KW-0648">Protein biosynthesis</keyword>
<keyword id="KW-1185">Reference proteome</keyword>
<keyword id="KW-0694">RNA-binding</keyword>
<keyword id="KW-0820">tRNA-binding</keyword>
<keyword id="KW-0862">Zinc</keyword>
<accession>A8EWI6</accession>
<comment type="function">
    <text evidence="1">Catalyzes the attachment of alanine to tRNA(Ala) in a two-step reaction: alanine is first activated by ATP to form Ala-AMP and then transferred to the acceptor end of tRNA(Ala). Also edits incorrectly charged Ser-tRNA(Ala) and Gly-tRNA(Ala) via its editing domain.</text>
</comment>
<comment type="catalytic activity">
    <reaction evidence="1">
        <text>tRNA(Ala) + L-alanine + ATP = L-alanyl-tRNA(Ala) + AMP + diphosphate</text>
        <dbReference type="Rhea" id="RHEA:12540"/>
        <dbReference type="Rhea" id="RHEA-COMP:9657"/>
        <dbReference type="Rhea" id="RHEA-COMP:9923"/>
        <dbReference type="ChEBI" id="CHEBI:30616"/>
        <dbReference type="ChEBI" id="CHEBI:33019"/>
        <dbReference type="ChEBI" id="CHEBI:57972"/>
        <dbReference type="ChEBI" id="CHEBI:78442"/>
        <dbReference type="ChEBI" id="CHEBI:78497"/>
        <dbReference type="ChEBI" id="CHEBI:456215"/>
        <dbReference type="EC" id="6.1.1.7"/>
    </reaction>
</comment>
<comment type="cofactor">
    <cofactor evidence="1">
        <name>Zn(2+)</name>
        <dbReference type="ChEBI" id="CHEBI:29105"/>
    </cofactor>
    <text evidence="1">Binds 1 zinc ion per subunit.</text>
</comment>
<comment type="subcellular location">
    <subcellularLocation>
        <location evidence="1">Cytoplasm</location>
    </subcellularLocation>
</comment>
<comment type="domain">
    <text evidence="1">Consists of three domains; the N-terminal catalytic domain, the editing domain and the C-terminal C-Ala domain. The editing domain removes incorrectly charged amino acids, while the C-Ala domain, along with tRNA(Ala), serves as a bridge to cooperatively bring together the editing and aminoacylation centers thus stimulating deacylation of misacylated tRNAs.</text>
</comment>
<comment type="similarity">
    <text evidence="1">Belongs to the class-II aminoacyl-tRNA synthetase family.</text>
</comment>
<reference key="1">
    <citation type="journal article" date="2007" name="PLoS ONE">
        <title>The complete genome sequence and analysis of the Epsilonproteobacterium Arcobacter butzleri.</title>
        <authorList>
            <person name="Miller W.G."/>
            <person name="Parker C.T."/>
            <person name="Rubenfield M."/>
            <person name="Mendz G.L."/>
            <person name="Woesten M.M.S.M."/>
            <person name="Ussery D.W."/>
            <person name="Stolz J.F."/>
            <person name="Binnewies T.T."/>
            <person name="Hallin P.F."/>
            <person name="Wang G."/>
            <person name="Malek J.A."/>
            <person name="Rogosin A."/>
            <person name="Stanker L.H."/>
            <person name="Mandrell R.E."/>
        </authorList>
    </citation>
    <scope>NUCLEOTIDE SEQUENCE [LARGE SCALE GENOMIC DNA]</scope>
    <source>
        <strain>RM4018</strain>
    </source>
</reference>